<organism>
    <name type="scientific">Homo sapiens</name>
    <name type="common">Human</name>
    <dbReference type="NCBI Taxonomy" id="9606"/>
    <lineage>
        <taxon>Eukaryota</taxon>
        <taxon>Metazoa</taxon>
        <taxon>Chordata</taxon>
        <taxon>Craniata</taxon>
        <taxon>Vertebrata</taxon>
        <taxon>Euteleostomi</taxon>
        <taxon>Mammalia</taxon>
        <taxon>Eutheria</taxon>
        <taxon>Euarchontoglires</taxon>
        <taxon>Primates</taxon>
        <taxon>Haplorrhini</taxon>
        <taxon>Catarrhini</taxon>
        <taxon>Hominidae</taxon>
        <taxon>Homo</taxon>
    </lineage>
</organism>
<reference evidence="8 9" key="1">
    <citation type="journal article" date="1999" name="Mol. Cell">
        <title>Identity between TRAP and SMCC complexes indicates novel pathways for the function of nuclear receptors and diverse mammalian activators.</title>
        <authorList>
            <person name="Ito M."/>
            <person name="Yuan C.-X."/>
            <person name="Malik S."/>
            <person name="Gu W."/>
            <person name="Fondell J.D."/>
            <person name="Yamamura S."/>
            <person name="Fu Z.-Y."/>
            <person name="Zhang X."/>
            <person name="Qin J."/>
            <person name="Roeder R.G."/>
        </authorList>
    </citation>
    <scope>NUCLEOTIDE SEQUENCE [MRNA] (ISOFORM 1)</scope>
    <scope>PROTEIN SEQUENCE OF 277-283</scope>
    <scope>IDENTIFICATION IN TRAP COMPLEX</scope>
    <scope>FUNCTION OF TRAP COMPLEX</scope>
    <source>
        <tissue>Cervix carcinoma</tissue>
    </source>
</reference>
<reference evidence="8 10" key="2">
    <citation type="journal article" date="1999" name="Nature">
        <title>Ligand-dependent transcription activation by nuclear receptors requires the DRIP complex.</title>
        <authorList>
            <person name="Rachez C."/>
            <person name="Lemon B.D."/>
            <person name="Suldan Z."/>
            <person name="Bromleigh V."/>
            <person name="Gamble M."/>
            <person name="Naeaer A.M."/>
            <person name="Erdjument-Bromage H."/>
            <person name="Tempst P."/>
            <person name="Freedman L.P."/>
        </authorList>
    </citation>
    <scope>NUCLEOTIDE SEQUENCE [MRNA] (ISOFORM 5)</scope>
    <scope>PROTEIN SEQUENCE OF 27-42 AND 755-772</scope>
    <scope>IDENTIFICATION IN ARC COMPLEX</scope>
    <scope>FUNCTION OF ARC COMPLEX</scope>
    <source>
        <tissue evidence="3">B-cell</tissue>
    </source>
</reference>
<reference evidence="11" key="3">
    <citation type="journal article" date="2004" name="Genome Res.">
        <title>The status, quality, and expansion of the NIH full-length cDNA project: the Mammalian Gene Collection (MGC).</title>
        <authorList>
            <consortium name="The MGC Project Team"/>
        </authorList>
    </citation>
    <scope>NUCLEOTIDE SEQUENCE [LARGE SCALE MRNA] (ISOFORMS 2 AND 3)</scope>
    <scope>NUCLEOTIDE SEQUENCE [LARGE SCALE MRNA] OF 248-877 (ISOFORM 4)</scope>
    <source>
        <tissue evidence="12">Skin</tissue>
        <tissue evidence="11">Uterus</tissue>
    </source>
</reference>
<reference key="4">
    <citation type="journal article" date="2004" name="Mol. Cell">
        <title>A set of consensus mammalian mediator subunits identified by multidimensional protein identification technology.</title>
        <authorList>
            <person name="Sato S."/>
            <person name="Tomomori-Sato C."/>
            <person name="Parmely T.J."/>
            <person name="Florens L."/>
            <person name="Zybailov B."/>
            <person name="Swanson S.K."/>
            <person name="Banks C.A.S."/>
            <person name="Jin J."/>
            <person name="Cai Y."/>
            <person name="Washburn M.P."/>
            <person name="Conaway J.W."/>
            <person name="Conaway R.C."/>
        </authorList>
    </citation>
    <scope>IDENTIFICATION BY MASS SPECTROMETRY</scope>
    <scope>IDENTIFICATION IN THE MEDIATOR COMPLEX</scope>
</reference>
<reference key="5">
    <citation type="journal article" date="2005" name="Mol. Cell">
        <title>MED1/TRAP220 exists predominantly in a TRAP/Mediator subpopulation enriched in RNA polymerase II and is required for ER-mediated transcription.</title>
        <authorList>
            <person name="Zhang X."/>
            <person name="Krutchinsky A."/>
            <person name="Fukuda A."/>
            <person name="Chen W."/>
            <person name="Yamamura S."/>
            <person name="Chait B.T."/>
            <person name="Roeder R.G."/>
        </authorList>
    </citation>
    <scope>INTERACTION WITH MED1; MED10; MED21 AND MED30</scope>
    <scope>IDENTIFICATION BY MASS SPECTROMETRY</scope>
    <scope>IDENTIFICATION IN THE MEDIATOR COMPLEX</scope>
    <scope>ASSOCIATION OF THE MEDIATOR COMPLEX WITH RNA POLYMERASE II</scope>
</reference>
<proteinExistence type="evidence at protein level"/>
<protein>
    <recommendedName>
        <fullName>Mediator of RNA polymerase II transcription subunit 16</fullName>
    </recommendedName>
    <alternativeName>
        <fullName>Mediator complex subunit 16</fullName>
    </alternativeName>
    <alternativeName>
        <fullName>Thyroid hormone receptor-associated protein 5</fullName>
    </alternativeName>
    <alternativeName>
        <fullName>Thyroid hormone receptor-associated protein complex 95 kDa component</fullName>
        <shortName>Trap95</shortName>
    </alternativeName>
    <alternativeName>
        <fullName>Vitamin D3 receptor-interacting protein complex 92 kDa component</fullName>
        <shortName>DRIP92</shortName>
    </alternativeName>
</protein>
<sequence>MCDLRRPAAGGMMDLAYVCEWEKWSKSTHCPSVPLACAWSCRNLIAFTMDLRSDDQDLTRMIHILDTEHPWDLHSIPSEHHEAITCLEWDQSGSRLLSADADGQIKCWSMADHLANSWESSVGSLVEGDPIVALSWLHNGVKLALHVEKSGASSFGEKFSRVKFSPSLTLFGGKPMEGWIAVTVSGLVTVSLLKPSGQVLTSTESLCRLRGRVALADIAFTGGGNIVVATADGSSASPVQFYKVCVSVVSEKCRIDTEILPSLFMRCTTDLNRKDKFPAITHLKFLARDMSEQVLLCASSQTSSIVECWSLRKEGLPVNNIFQQISPVVGDKQPTILKWRILSATNDLDRVSAVALPKLPISLTNTDLKVASDTQFYPGLGLALAFHDGSVHIVHRLSLQTMAVFYSSAAPRPVDEPAMKRPRTAGPAVHLKAMQLSWTSLALVGIDSHGKLSVLRLSPSMGHPLEVGLALRHLLFLLEYCMVTGYDWWDILLHVQPSMVQSLVEKLHEEYTRQTAALQQVLSTRILAMKASLCKLSPCTVTRVCDYHTKLFLIAISSTLKSLLRPHFLNTPDKSPGDRLTEICTKITDVDIDKVMINLKTEEFVLDMNTLQALQQLLQWVGDFVLYLLASLPNQGSLLRPGHSFLRDGTSLGMLRELMVVIRIWGLLKPSCLPVYTATSDTQDSMSLLFRLLTKLWICCRDEGPASEPDEALVDECCLLPSQLLIPSLDWLPASDGLVSRLQPKQPLRLQFGRAPTLPGSAATLQLDGLARAPGQPKIDHLRRLHLGACPTEECKACTRCGCVTMLKSPNRTTAVKQWEQRWIKNCLAVEGRGPDACVTSRASEEAPAFVQLGPQSTHHSPRTPRSLDHLHPEDRP</sequence>
<comment type="function">
    <text evidence="2 3">Component of the Mediator complex, a coactivator involved in the regulated transcription of nearly all RNA polymerase II-dependent genes. Mediator functions as a bridge to convey information from gene-specific regulatory proteins to the basal RNA polymerase II transcription machinery. Mediator is recruited to promoters by direct interactions with regulatory proteins and serves as a scaffold for the assembly of a functional preinitiation complex with RNA polymerase II and the general transcription factors.</text>
</comment>
<comment type="subunit">
    <text evidence="2 3 4 5">Component of the Mediator complex, which is composed of MED1, MED4, MED6, MED7, MED8, MED9, MED10, MED11, MED12, MED13, MED13L, MED14, MED15, MED16, MED17, MED18, MED19, MED20, MED21, MED22, MED23, MED24, MED25, MED26, MED27, MED29, MED30, MED31, CCNC, CDK8 and CDC2L6/CDK11. The MED12, MED13, CCNC and CDK8 subunits form a distinct module termed the CDK8 module. Mediator containing the CDK8 module is less active than Mediator lacking this module in supporting transcriptional activation. Individual preparations of the Mediator complex lacking one or more distinct subunits have been variously termed ARC, CRSP, DRIP, PC2, SMCC and TRAP.</text>
</comment>
<comment type="interaction">
    <interactant intactId="EBI-394541">
        <id>Q9Y2X0</id>
    </interactant>
    <interactant intactId="EBI-394489">
        <id>O60244</id>
        <label>MED14</label>
    </interactant>
    <organismsDiffer>false</organismsDiffer>
    <experiments>3</experiments>
</comment>
<comment type="interaction">
    <interactant intactId="EBI-394541">
        <id>Q9Y2X0</id>
    </interactant>
    <interactant intactId="EBI-311161">
        <id>Q9ULK4</id>
        <label>MED23</label>
    </interactant>
    <organismsDiffer>false</organismsDiffer>
    <experiments>5</experiments>
</comment>
<comment type="interaction">
    <interactant intactId="EBI-394541">
        <id>Q9Y2X0</id>
    </interactant>
    <interactant intactId="EBI-394523">
        <id>O75448</id>
        <label>MED24</label>
    </interactant>
    <organismsDiffer>false</organismsDiffer>
    <experiments>4</experiments>
</comment>
<comment type="interaction">
    <interactant intactId="EBI-394541">
        <id>Q9Y2X0</id>
    </interactant>
    <interactant intactId="EBI-394558">
        <id>Q71SY5</id>
        <label>MED25</label>
    </interactant>
    <organismsDiffer>false</organismsDiffer>
    <experiments>4</experiments>
</comment>
<comment type="subcellular location">
    <subcellularLocation>
        <location evidence="8">Nucleus</location>
    </subcellularLocation>
</comment>
<comment type="alternative products">
    <event type="alternative splicing"/>
    <isoform>
        <id>Q9Y2X0-1</id>
        <name evidence="2">1</name>
        <sequence type="displayed"/>
    </isoform>
    <isoform>
        <id>Q9Y2X0-2</id>
        <name evidence="8">2</name>
        <sequence type="described" ref="VSP_051724"/>
    </isoform>
    <isoform>
        <id>Q9Y2X0-3</id>
        <name evidence="8">3</name>
        <sequence type="described" ref="VSP_051722 VSP_051724"/>
    </isoform>
    <isoform>
        <id>Q9Y2X0-4</id>
        <name evidence="8">4</name>
        <sequence type="described" ref="VSP_051721 VSP_051723"/>
    </isoform>
    <isoform>
        <id>Q9Y2X0-5</id>
        <name>5</name>
        <sequence type="described" ref="VSP_028749 VSP_028750"/>
    </isoform>
</comment>
<comment type="similarity">
    <text evidence="8">Belongs to the Mediator complex subunit 16 family.</text>
</comment>
<comment type="caution">
    <text evidence="8">It is uncertain whether Met-1 or Met-13 is the initiator.</text>
</comment>
<comment type="sequence caution" evidence="8">
    <conflict type="frameshift">
        <sequence resource="EMBL-CDS" id="AAD31087"/>
    </conflict>
</comment>
<dbReference type="EMBL" id="AF121228">
    <property type="protein sequence ID" value="AAD30032.1"/>
    <property type="molecule type" value="mRNA"/>
</dbReference>
<dbReference type="EMBL" id="AF106934">
    <property type="protein sequence ID" value="AAD31087.1"/>
    <property type="status" value="ALT_FRAME"/>
    <property type="molecule type" value="mRNA"/>
</dbReference>
<dbReference type="EMBL" id="BC004554">
    <property type="protein sequence ID" value="AAH04554.1"/>
    <property type="molecule type" value="mRNA"/>
</dbReference>
<dbReference type="EMBL" id="BC007853">
    <property type="protein sequence ID" value="AAH07853.2"/>
    <property type="molecule type" value="mRNA"/>
</dbReference>
<dbReference type="EMBL" id="BC011841">
    <property type="protein sequence ID" value="AAH11841.1"/>
    <property type="molecule type" value="mRNA"/>
</dbReference>
<dbReference type="EMBL" id="BC017282">
    <property type="protein sequence ID" value="AAH17282.1"/>
    <property type="molecule type" value="mRNA"/>
</dbReference>
<dbReference type="CCDS" id="CCDS12047.1">
    <molecule id="Q9Y2X0-1"/>
</dbReference>
<dbReference type="RefSeq" id="NP_005472.2">
    <molecule id="Q9Y2X0-1"/>
    <property type="nucleotide sequence ID" value="NM_005481.2"/>
</dbReference>
<dbReference type="PDB" id="7EMF">
    <property type="method" value="EM"/>
    <property type="resolution" value="3.50 A"/>
    <property type="chains" value="P=1-828"/>
</dbReference>
<dbReference type="PDB" id="7ENA">
    <property type="method" value="EM"/>
    <property type="resolution" value="4.07 A"/>
    <property type="chains" value="p=1-828"/>
</dbReference>
<dbReference type="PDB" id="7ENC">
    <property type="method" value="EM"/>
    <property type="resolution" value="4.13 A"/>
    <property type="chains" value="p=1-828"/>
</dbReference>
<dbReference type="PDB" id="7ENJ">
    <property type="method" value="EM"/>
    <property type="resolution" value="4.40 A"/>
    <property type="chains" value="P=1-877"/>
</dbReference>
<dbReference type="PDB" id="7LBM">
    <property type="method" value="EM"/>
    <property type="resolution" value="4.80 A"/>
    <property type="chains" value="0=1-828"/>
</dbReference>
<dbReference type="PDB" id="8GXQ">
    <property type="method" value="EM"/>
    <property type="resolution" value="5.04 A"/>
    <property type="chains" value="p=1-828"/>
</dbReference>
<dbReference type="PDB" id="8GXS">
    <property type="method" value="EM"/>
    <property type="resolution" value="4.16 A"/>
    <property type="chains" value="p=1-828"/>
</dbReference>
<dbReference type="PDB" id="8T9D">
    <property type="method" value="EM"/>
    <property type="resolution" value="4.66 A"/>
    <property type="chains" value="K=1-877"/>
</dbReference>
<dbReference type="PDB" id="8TQW">
    <property type="method" value="EM"/>
    <property type="resolution" value="8.20 A"/>
    <property type="chains" value="P=1-877"/>
</dbReference>
<dbReference type="PDB" id="8TRH">
    <property type="method" value="EM"/>
    <property type="resolution" value="3.70 A"/>
    <property type="chains" value="P=1-877"/>
</dbReference>
<dbReference type="PDBsum" id="7EMF"/>
<dbReference type="PDBsum" id="7ENA"/>
<dbReference type="PDBsum" id="7ENC"/>
<dbReference type="PDBsum" id="7ENJ"/>
<dbReference type="PDBsum" id="7LBM"/>
<dbReference type="PDBsum" id="8GXQ"/>
<dbReference type="PDBsum" id="8GXS"/>
<dbReference type="PDBsum" id="8T9D"/>
<dbReference type="PDBsum" id="8TQW"/>
<dbReference type="PDBsum" id="8TRH"/>
<dbReference type="EMDB" id="EMD-23255"/>
<dbReference type="EMDB" id="EMD-31191"/>
<dbReference type="EMDB" id="EMD-31204"/>
<dbReference type="EMDB" id="EMD-31207"/>
<dbReference type="EMDB" id="EMD-31211"/>
<dbReference type="EMDB" id="EMD-34359"/>
<dbReference type="EMDB" id="EMD-34360"/>
<dbReference type="EMDB" id="EMD-41107"/>
<dbReference type="EMDB" id="EMD-41565"/>
<dbReference type="EMDB" id="EMD-41580"/>
<dbReference type="SMR" id="Q9Y2X0"/>
<dbReference type="BioGRID" id="115342">
    <property type="interactions" value="113"/>
</dbReference>
<dbReference type="ComplexPortal" id="CPX-3227">
    <property type="entry name" value="Core mediator complex"/>
</dbReference>
<dbReference type="CORUM" id="Q9Y2X0"/>
<dbReference type="DIP" id="DIP-31463N"/>
<dbReference type="FunCoup" id="Q9Y2X0">
    <property type="interactions" value="2612"/>
</dbReference>
<dbReference type="IntAct" id="Q9Y2X0">
    <property type="interactions" value="63"/>
</dbReference>
<dbReference type="MINT" id="Q9Y2X0"/>
<dbReference type="STRING" id="9606.ENSP00000325612"/>
<dbReference type="GlyGen" id="Q9Y2X0">
    <property type="glycosylation" value="2 sites, 1 O-linked glycan (1 site)"/>
</dbReference>
<dbReference type="iPTMnet" id="Q9Y2X0"/>
<dbReference type="PhosphoSitePlus" id="Q9Y2X0"/>
<dbReference type="SwissPalm" id="Q9Y2X0"/>
<dbReference type="BioMuta" id="MED16"/>
<dbReference type="DMDM" id="62511180"/>
<dbReference type="jPOST" id="Q9Y2X0"/>
<dbReference type="MassIVE" id="Q9Y2X0"/>
<dbReference type="PaxDb" id="9606-ENSP00000325612"/>
<dbReference type="PeptideAtlas" id="Q9Y2X0"/>
<dbReference type="ProteomicsDB" id="85922">
    <molecule id="Q9Y2X0-1"/>
</dbReference>
<dbReference type="ProteomicsDB" id="85923">
    <molecule id="Q9Y2X0-2"/>
</dbReference>
<dbReference type="ProteomicsDB" id="85924">
    <molecule id="Q9Y2X0-3"/>
</dbReference>
<dbReference type="ProteomicsDB" id="85925">
    <molecule id="Q9Y2X0-4"/>
</dbReference>
<dbReference type="ProteomicsDB" id="85926">
    <molecule id="Q9Y2X0-5"/>
</dbReference>
<dbReference type="Pumba" id="Q9Y2X0"/>
<dbReference type="Antibodypedia" id="10226">
    <property type="antibodies" value="190 antibodies from 24 providers"/>
</dbReference>
<dbReference type="DNASU" id="10025"/>
<dbReference type="Ensembl" id="ENST00000312090.10">
    <molecule id="Q9Y2X0-3"/>
    <property type="protein sequence ID" value="ENSP00000308528.4"/>
    <property type="gene ID" value="ENSG00000175221.16"/>
</dbReference>
<dbReference type="Ensembl" id="ENST00000325464.6">
    <molecule id="Q9Y2X0-1"/>
    <property type="protein sequence ID" value="ENSP00000325612.1"/>
    <property type="gene ID" value="ENSG00000175221.16"/>
</dbReference>
<dbReference type="Ensembl" id="ENST00000395808.7">
    <molecule id="Q9Y2X0-2"/>
    <property type="protein sequence ID" value="ENSP00000379153.1"/>
    <property type="gene ID" value="ENSG00000175221.16"/>
</dbReference>
<dbReference type="GeneID" id="10025"/>
<dbReference type="KEGG" id="hsa:10025"/>
<dbReference type="MANE-Select" id="ENST00000325464.6">
    <property type="protein sequence ID" value="ENSP00000325612.1"/>
    <property type="RefSeq nucleotide sequence ID" value="NM_005481.3"/>
    <property type="RefSeq protein sequence ID" value="NP_005472.2"/>
</dbReference>
<dbReference type="UCSC" id="uc002lqd.2">
    <molecule id="Q9Y2X0-1"/>
    <property type="organism name" value="human"/>
</dbReference>
<dbReference type="AGR" id="HGNC:17556"/>
<dbReference type="CTD" id="10025"/>
<dbReference type="DisGeNET" id="10025"/>
<dbReference type="GeneCards" id="MED16"/>
<dbReference type="HGNC" id="HGNC:17556">
    <property type="gene designation" value="MED16"/>
</dbReference>
<dbReference type="HPA" id="ENSG00000175221">
    <property type="expression patterns" value="Low tissue specificity"/>
</dbReference>
<dbReference type="MIM" id="604062">
    <property type="type" value="gene"/>
</dbReference>
<dbReference type="neXtProt" id="NX_Q9Y2X0"/>
<dbReference type="OpenTargets" id="ENSG00000175221"/>
<dbReference type="PharmGKB" id="PA162395406"/>
<dbReference type="VEuPathDB" id="HostDB:ENSG00000175221"/>
<dbReference type="eggNOG" id="ENOG502QQ3H">
    <property type="taxonomic scope" value="Eukaryota"/>
</dbReference>
<dbReference type="GeneTree" id="ENSGT00390000003821"/>
<dbReference type="HOGENOM" id="CLU_018773_0_0_1"/>
<dbReference type="InParanoid" id="Q9Y2X0"/>
<dbReference type="OMA" id="EIWQPKE"/>
<dbReference type="OrthoDB" id="10018574at2759"/>
<dbReference type="PAN-GO" id="Q9Y2X0">
    <property type="GO annotations" value="2 GO annotations based on evolutionary models"/>
</dbReference>
<dbReference type="PhylomeDB" id="Q9Y2X0"/>
<dbReference type="PathwayCommons" id="Q9Y2X0"/>
<dbReference type="Reactome" id="R-HSA-1989781">
    <property type="pathway name" value="PPARA activates gene expression"/>
</dbReference>
<dbReference type="Reactome" id="R-HSA-212436">
    <property type="pathway name" value="Generic Transcription Pathway"/>
</dbReference>
<dbReference type="Reactome" id="R-HSA-381340">
    <property type="pathway name" value="Transcriptional regulation of white adipocyte differentiation"/>
</dbReference>
<dbReference type="Reactome" id="R-HSA-9833110">
    <property type="pathway name" value="RSV-host interactions"/>
</dbReference>
<dbReference type="Reactome" id="R-HSA-9841922">
    <property type="pathway name" value="MLL4 and MLL3 complexes regulate expression of PPARG target genes in adipogenesis and hepatic steatosis"/>
</dbReference>
<dbReference type="SignaLink" id="Q9Y2X0"/>
<dbReference type="SIGNOR" id="Q9Y2X0"/>
<dbReference type="BioGRID-ORCS" id="10025">
    <property type="hits" value="162 hits in 1188 CRISPR screens"/>
</dbReference>
<dbReference type="CD-CODE" id="38EC0B30">
    <property type="entry name" value="Transcriptional condensate"/>
</dbReference>
<dbReference type="ChiTaRS" id="MED16">
    <property type="organism name" value="human"/>
</dbReference>
<dbReference type="GeneWiki" id="MED16"/>
<dbReference type="GenomeRNAi" id="10025"/>
<dbReference type="Pharos" id="Q9Y2X0">
    <property type="development level" value="Tbio"/>
</dbReference>
<dbReference type="PRO" id="PR:Q9Y2X0"/>
<dbReference type="Proteomes" id="UP000005640">
    <property type="component" value="Chromosome 19"/>
</dbReference>
<dbReference type="RNAct" id="Q9Y2X0">
    <property type="molecule type" value="protein"/>
</dbReference>
<dbReference type="Bgee" id="ENSG00000175221">
    <property type="expression patterns" value="Expressed in lower esophagus mucosa and 95 other cell types or tissues"/>
</dbReference>
<dbReference type="ExpressionAtlas" id="Q9Y2X0">
    <property type="expression patterns" value="baseline and differential"/>
</dbReference>
<dbReference type="GO" id="GO:0070847">
    <property type="term" value="C:core mediator complex"/>
    <property type="evidence" value="ECO:0000353"/>
    <property type="project" value="ComplexPortal"/>
</dbReference>
<dbReference type="GO" id="GO:0016592">
    <property type="term" value="C:mediator complex"/>
    <property type="evidence" value="ECO:0000314"/>
    <property type="project" value="UniProtKB"/>
</dbReference>
<dbReference type="GO" id="GO:0016020">
    <property type="term" value="C:membrane"/>
    <property type="evidence" value="ECO:0007005"/>
    <property type="project" value="UniProtKB"/>
</dbReference>
<dbReference type="GO" id="GO:0005654">
    <property type="term" value="C:nucleoplasm"/>
    <property type="evidence" value="ECO:0000304"/>
    <property type="project" value="Reactome"/>
</dbReference>
<dbReference type="GO" id="GO:0005634">
    <property type="term" value="C:nucleus"/>
    <property type="evidence" value="ECO:0000314"/>
    <property type="project" value="ComplexPortal"/>
</dbReference>
<dbReference type="GO" id="GO:0046966">
    <property type="term" value="F:nuclear thyroid hormone receptor binding"/>
    <property type="evidence" value="ECO:0000314"/>
    <property type="project" value="UniProtKB"/>
</dbReference>
<dbReference type="GO" id="GO:0042809">
    <property type="term" value="F:nuclear vitamin D receptor binding"/>
    <property type="evidence" value="ECO:0000303"/>
    <property type="project" value="UniProtKB"/>
</dbReference>
<dbReference type="GO" id="GO:0003713">
    <property type="term" value="F:transcription coactivator activity"/>
    <property type="evidence" value="ECO:0000314"/>
    <property type="project" value="UniProtKB"/>
</dbReference>
<dbReference type="GO" id="GO:0045893">
    <property type="term" value="P:positive regulation of DNA-templated transcription"/>
    <property type="evidence" value="ECO:0000314"/>
    <property type="project" value="UniProtKB"/>
</dbReference>
<dbReference type="GO" id="GO:0032968">
    <property type="term" value="P:positive regulation of transcription elongation by RNA polymerase II"/>
    <property type="evidence" value="ECO:0000303"/>
    <property type="project" value="ComplexPortal"/>
</dbReference>
<dbReference type="GO" id="GO:0060261">
    <property type="term" value="P:positive regulation of transcription initiation by RNA polymerase II"/>
    <property type="evidence" value="ECO:0000314"/>
    <property type="project" value="UniProtKB"/>
</dbReference>
<dbReference type="GO" id="GO:0006357">
    <property type="term" value="P:regulation of transcription by RNA polymerase II"/>
    <property type="evidence" value="ECO:0000303"/>
    <property type="project" value="UniProtKB"/>
</dbReference>
<dbReference type="GO" id="GO:0051123">
    <property type="term" value="P:RNA polymerase II preinitiation complex assembly"/>
    <property type="evidence" value="ECO:0000303"/>
    <property type="project" value="ComplexPortal"/>
</dbReference>
<dbReference type="GO" id="GO:0006366">
    <property type="term" value="P:transcription by RNA polymerase II"/>
    <property type="evidence" value="ECO:0000304"/>
    <property type="project" value="ProtInc"/>
</dbReference>
<dbReference type="FunFam" id="2.130.10.10:FF:000165">
    <property type="entry name" value="Mediator of RNA polymerase II transcription subunit 16"/>
    <property type="match status" value="1"/>
</dbReference>
<dbReference type="Gene3D" id="2.130.10.10">
    <property type="entry name" value="YVTN repeat-like/Quinoprotein amine dehydrogenase"/>
    <property type="match status" value="1"/>
</dbReference>
<dbReference type="InterPro" id="IPR048616">
    <property type="entry name" value="MED16_bridge"/>
</dbReference>
<dbReference type="InterPro" id="IPR048338">
    <property type="entry name" value="Mediator_Med16"/>
</dbReference>
<dbReference type="InterPro" id="IPR048339">
    <property type="entry name" value="Mediator_Med16_C"/>
</dbReference>
<dbReference type="InterPro" id="IPR021665">
    <property type="entry name" value="Mediator_Med16_N"/>
</dbReference>
<dbReference type="InterPro" id="IPR011041">
    <property type="entry name" value="Quinoprot_gluc/sorb_DH_b-prop"/>
</dbReference>
<dbReference type="InterPro" id="IPR015943">
    <property type="entry name" value="WD40/YVTN_repeat-like_dom_sf"/>
</dbReference>
<dbReference type="InterPro" id="IPR036322">
    <property type="entry name" value="WD40_repeat_dom_sf"/>
</dbReference>
<dbReference type="InterPro" id="IPR001680">
    <property type="entry name" value="WD40_rpt"/>
</dbReference>
<dbReference type="PANTHER" id="PTHR13224:SF6">
    <property type="entry name" value="MEDIATOR OF RNA POLYMERASE II TRANSCRIPTION SUBUNIT 16"/>
    <property type="match status" value="1"/>
</dbReference>
<dbReference type="PANTHER" id="PTHR13224">
    <property type="entry name" value="THYROID HORMONE RECEPTOR-ASSOCIATED PROTEIN-RELATED"/>
    <property type="match status" value="1"/>
</dbReference>
<dbReference type="Pfam" id="PF20718">
    <property type="entry name" value="Med16_bridge"/>
    <property type="match status" value="1"/>
</dbReference>
<dbReference type="Pfam" id="PF20719">
    <property type="entry name" value="Med16_C"/>
    <property type="match status" value="1"/>
</dbReference>
<dbReference type="Pfam" id="PF11635">
    <property type="entry name" value="Med16_N"/>
    <property type="match status" value="1"/>
</dbReference>
<dbReference type="Pfam" id="PF00400">
    <property type="entry name" value="WD40"/>
    <property type="match status" value="1"/>
</dbReference>
<dbReference type="SMART" id="SM00320">
    <property type="entry name" value="WD40"/>
    <property type="match status" value="1"/>
</dbReference>
<dbReference type="SUPFAM" id="SSF50952">
    <property type="entry name" value="Soluble quinoprotein glucose dehydrogenase"/>
    <property type="match status" value="1"/>
</dbReference>
<dbReference type="SUPFAM" id="SSF50978">
    <property type="entry name" value="WD40 repeat-like"/>
    <property type="match status" value="1"/>
</dbReference>
<dbReference type="PROSITE" id="PS50082">
    <property type="entry name" value="WD_REPEATS_2"/>
    <property type="match status" value="1"/>
</dbReference>
<dbReference type="PROSITE" id="PS50294">
    <property type="entry name" value="WD_REPEATS_REGION"/>
    <property type="match status" value="1"/>
</dbReference>
<keyword id="KW-0002">3D-structure</keyword>
<keyword id="KW-0010">Activator</keyword>
<keyword id="KW-0025">Alternative splicing</keyword>
<keyword id="KW-0903">Direct protein sequencing</keyword>
<keyword id="KW-0539">Nucleus</keyword>
<keyword id="KW-1267">Proteomics identification</keyword>
<keyword id="KW-1185">Reference proteome</keyword>
<keyword id="KW-0677">Repeat</keyword>
<keyword id="KW-0804">Transcription</keyword>
<keyword id="KW-0805">Transcription regulation</keyword>
<keyword id="KW-0853">WD repeat</keyword>
<gene>
    <name type="primary">MED16</name>
    <name evidence="10" type="synonym">DRIP92</name>
    <name type="synonym">THRAP5</name>
</gene>
<accession>Q9Y2X0</accession>
<accession>Q6PJT2</accession>
<accession>Q96AD4</accession>
<accession>Q96I35</accession>
<accession>Q9Y652</accession>
<name>MED16_HUMAN</name>
<evidence type="ECO:0000256" key="1">
    <source>
        <dbReference type="SAM" id="MobiDB-lite"/>
    </source>
</evidence>
<evidence type="ECO:0000269" key="2">
    <source>
    </source>
</evidence>
<evidence type="ECO:0000269" key="3">
    <source>
    </source>
</evidence>
<evidence type="ECO:0000269" key="4">
    <source>
    </source>
</evidence>
<evidence type="ECO:0000269" key="5">
    <source>
    </source>
</evidence>
<evidence type="ECO:0000303" key="6">
    <source>
    </source>
</evidence>
<evidence type="ECO:0000303" key="7">
    <source>
    </source>
</evidence>
<evidence type="ECO:0000305" key="8"/>
<evidence type="ECO:0000312" key="9">
    <source>
        <dbReference type="EMBL" id="AAD30032.1"/>
    </source>
</evidence>
<evidence type="ECO:0000312" key="10">
    <source>
        <dbReference type="EMBL" id="AAD31087.1"/>
    </source>
</evidence>
<evidence type="ECO:0000312" key="11">
    <source>
        <dbReference type="EMBL" id="AAH11841.1"/>
    </source>
</evidence>
<evidence type="ECO:0000312" key="12">
    <source>
        <dbReference type="EMBL" id="AAH17282.1"/>
    </source>
</evidence>
<evidence type="ECO:0007829" key="13">
    <source>
        <dbReference type="PDB" id="7EMF"/>
    </source>
</evidence>
<feature type="chain" id="PRO_0000051292" description="Mediator of RNA polymerase II transcription subunit 16">
    <location>
        <begin position="1"/>
        <end position="877"/>
    </location>
</feature>
<feature type="repeat" description="WD 1">
    <location>
        <begin position="21"/>
        <end position="71"/>
    </location>
</feature>
<feature type="repeat" description="WD 2">
    <location>
        <begin position="72"/>
        <end position="119"/>
    </location>
</feature>
<feature type="repeat" description="WD 3">
    <location>
        <begin position="120"/>
        <end position="165"/>
    </location>
</feature>
<feature type="repeat" description="WD 4">
    <location>
        <begin position="166"/>
        <end position="203"/>
    </location>
</feature>
<feature type="repeat" description="WD 5">
    <location>
        <begin position="204"/>
        <end position="257"/>
    </location>
</feature>
<feature type="repeat" description="WD 6">
    <location>
        <begin position="258"/>
        <end position="334"/>
    </location>
</feature>
<feature type="repeat" description="WD 7">
    <location>
        <begin position="335"/>
        <end position="415"/>
    </location>
</feature>
<feature type="repeat" description="WD 8">
    <location>
        <begin position="416"/>
        <end position="460"/>
    </location>
</feature>
<feature type="repeat" description="WD 9">
    <location>
        <begin position="461"/>
        <end position="495"/>
    </location>
</feature>
<feature type="region of interest" description="Disordered" evidence="1">
    <location>
        <begin position="848"/>
        <end position="877"/>
    </location>
</feature>
<feature type="compositionally biased region" description="Basic and acidic residues" evidence="1">
    <location>
        <begin position="866"/>
        <end position="877"/>
    </location>
</feature>
<feature type="splice variant" id="VSP_051721" description="In isoform 4." evidence="7">
    <original>GSLLRPGHSFLRDGTSLGMLRELMVVIRIWGLLKPSCLPVYTATSDTQDSMSLLFRLLTKLWICCRDEGPASEPDEALVDECCLLPSQLLIPSLDWLPASDGLVSRLQPKQPLRLQ</original>
    <variation>VAMRAQRASRTRRWWMNAACCPASCLSPAWTGCQPATAWLAACSPSSPFVCSLAGRPRCLAVLPPCSSTASPGPQASPRSTTCGGCTLALAPRRNARPAPGAAVSPCSSRPTEPRR</variation>
    <location>
        <begin position="636"/>
        <end position="751"/>
    </location>
</feature>
<feature type="splice variant" id="VSP_028749" description="In isoform 5." evidence="6">
    <original>GSLLRPGHSFLRDGTSLGMLRELMVVIR</original>
    <variation>PCPTSEPCPTSEPSPTSEPSPTSEPSSP</variation>
    <location>
        <begin position="636"/>
        <end position="663"/>
    </location>
</feature>
<feature type="splice variant" id="VSP_028750" description="In isoform 5." evidence="6">
    <location>
        <begin position="664"/>
        <end position="877"/>
    </location>
</feature>
<feature type="splice variant" id="VSP_051722" description="In isoform 3." evidence="7">
    <original>C</original>
    <variation>FPSTGPCSVWVLLGWQPLPG</variation>
    <location>
        <position position="700"/>
    </location>
</feature>
<feature type="splice variant" id="VSP_051723" description="In isoform 4." evidence="7">
    <location>
        <begin position="752"/>
        <end position="877"/>
    </location>
</feature>
<feature type="splice variant" id="VSP_051724" description="In isoform 2 and isoform 3." evidence="6 7">
    <original>AVEGRGPDACVTSRASEEAPAFVQLGPQSTHHSPRTPRSLDHLHPEDRP</original>
    <variation>CGGLWWRVPLSYP</variation>
    <location>
        <begin position="829"/>
        <end position="877"/>
    </location>
</feature>
<feature type="sequence variant" id="VAR_053958" description="In dbSNP:rs34859566.">
    <original>L</original>
    <variation>F</variation>
    <location>
        <position position="770"/>
    </location>
</feature>
<feature type="sequence variant" id="VAR_053959" description="In dbSNP:rs13090.">
    <original>E</original>
    <variation>K</variation>
    <location>
        <position position="874"/>
    </location>
</feature>
<feature type="sequence conflict" description="In Ref. 1; AAD30032." evidence="8" ref="1">
    <original>A</original>
    <variation>T</variation>
    <location>
        <position position="46"/>
    </location>
</feature>
<feature type="sequence conflict" description="In Ref. 2; AAD31087." evidence="8" ref="2">
    <original>G</original>
    <variation>A</variation>
    <location>
        <position position="211"/>
    </location>
</feature>
<feature type="sequence conflict" description="In Ref. 1; AAD30032." evidence="8" ref="1">
    <original>R</original>
    <variation>K</variation>
    <location>
        <position position="412"/>
    </location>
</feature>
<feature type="strand" evidence="13">
    <location>
        <begin position="13"/>
        <end position="20"/>
    </location>
</feature>
<feature type="strand" evidence="13">
    <location>
        <begin position="37"/>
        <end position="39"/>
    </location>
</feature>
<feature type="strand" evidence="13">
    <location>
        <begin position="41"/>
        <end position="48"/>
    </location>
</feature>
<feature type="helix" evidence="13">
    <location>
        <begin position="57"/>
        <end position="59"/>
    </location>
</feature>
<feature type="strand" evidence="13">
    <location>
        <begin position="60"/>
        <end position="66"/>
    </location>
</feature>
<feature type="strand" evidence="13">
    <location>
        <begin position="73"/>
        <end position="77"/>
    </location>
</feature>
<feature type="strand" evidence="13">
    <location>
        <begin position="84"/>
        <end position="89"/>
    </location>
</feature>
<feature type="strand" evidence="13">
    <location>
        <begin position="91"/>
        <end position="103"/>
    </location>
</feature>
<feature type="strand" evidence="13">
    <location>
        <begin position="105"/>
        <end position="111"/>
    </location>
</feature>
<feature type="strand" evidence="13">
    <location>
        <begin position="114"/>
        <end position="124"/>
    </location>
</feature>
<feature type="strand" evidence="13">
    <location>
        <begin position="131"/>
        <end position="136"/>
    </location>
</feature>
<feature type="strand" evidence="13">
    <location>
        <begin position="143"/>
        <end position="145"/>
    </location>
</feature>
<feature type="helix" evidence="13">
    <location>
        <begin position="147"/>
        <end position="149"/>
    </location>
</feature>
<feature type="helix" evidence="13">
    <location>
        <begin position="155"/>
        <end position="158"/>
    </location>
</feature>
<feature type="strand" evidence="13">
    <location>
        <begin position="159"/>
        <end position="161"/>
    </location>
</feature>
<feature type="strand" evidence="13">
    <location>
        <begin position="167"/>
        <end position="169"/>
    </location>
</feature>
<feature type="strand" evidence="13">
    <location>
        <begin position="171"/>
        <end position="173"/>
    </location>
</feature>
<feature type="strand" evidence="13">
    <location>
        <begin position="177"/>
        <end position="193"/>
    </location>
</feature>
<feature type="strand" evidence="13">
    <location>
        <begin position="195"/>
        <end position="197"/>
    </location>
</feature>
<feature type="strand" evidence="13">
    <location>
        <begin position="199"/>
        <end position="209"/>
    </location>
</feature>
<feature type="strand" evidence="13">
    <location>
        <begin position="214"/>
        <end position="220"/>
    </location>
</feature>
<feature type="strand" evidence="13">
    <location>
        <begin position="226"/>
        <end position="231"/>
    </location>
</feature>
<feature type="strand" evidence="13">
    <location>
        <begin position="235"/>
        <end position="237"/>
    </location>
</feature>
<feature type="strand" evidence="13">
    <location>
        <begin position="239"/>
        <end position="249"/>
    </location>
</feature>
<feature type="strand" evidence="13">
    <location>
        <begin position="252"/>
        <end position="259"/>
    </location>
</feature>
<feature type="strand" evidence="13">
    <location>
        <begin position="279"/>
        <end position="287"/>
    </location>
</feature>
<feature type="strand" evidence="13">
    <location>
        <begin position="290"/>
        <end position="299"/>
    </location>
</feature>
<feature type="strand" evidence="13">
    <location>
        <begin position="304"/>
        <end position="310"/>
    </location>
</feature>
<feature type="strand" evidence="13">
    <location>
        <begin position="340"/>
        <end position="344"/>
    </location>
</feature>
<feature type="strand" evidence="13">
    <location>
        <begin position="351"/>
        <end position="355"/>
    </location>
</feature>
<feature type="helix" evidence="13">
    <location>
        <begin position="365"/>
        <end position="373"/>
    </location>
</feature>
<feature type="strand" evidence="13">
    <location>
        <begin position="378"/>
        <end position="389"/>
    </location>
</feature>
<feature type="strand" evidence="13">
    <location>
        <begin position="391"/>
        <end position="398"/>
    </location>
</feature>
<feature type="strand" evidence="13">
    <location>
        <begin position="401"/>
        <end position="405"/>
    </location>
</feature>
<feature type="strand" evidence="13">
    <location>
        <begin position="431"/>
        <end position="436"/>
    </location>
</feature>
<feature type="strand" evidence="13">
    <location>
        <begin position="438"/>
        <end position="450"/>
    </location>
</feature>
<feature type="strand" evidence="13">
    <location>
        <begin position="452"/>
        <end position="457"/>
    </location>
</feature>
<feature type="turn" evidence="13">
    <location>
        <begin position="459"/>
        <end position="462"/>
    </location>
</feature>
<feature type="helix" evidence="13">
    <location>
        <begin position="467"/>
        <end position="483"/>
    </location>
</feature>
<feature type="helix" evidence="13">
    <location>
        <begin position="489"/>
        <end position="492"/>
    </location>
</feature>
<feature type="helix" evidence="13">
    <location>
        <begin position="497"/>
        <end position="499"/>
    </location>
</feature>
<feature type="helix" evidence="13">
    <location>
        <begin position="500"/>
        <end position="511"/>
    </location>
</feature>
<feature type="helix" evidence="13">
    <location>
        <begin position="518"/>
        <end position="521"/>
    </location>
</feature>
<feature type="helix" evidence="13">
    <location>
        <begin position="523"/>
        <end position="534"/>
    </location>
</feature>
<feature type="turn" evidence="13">
    <location>
        <begin position="538"/>
        <end position="540"/>
    </location>
</feature>
<feature type="helix" evidence="13">
    <location>
        <begin position="541"/>
        <end position="543"/>
    </location>
</feature>
<feature type="helix" evidence="13">
    <location>
        <begin position="544"/>
        <end position="563"/>
    </location>
</feature>
<feature type="helix" evidence="13">
    <location>
        <begin position="576"/>
        <end position="586"/>
    </location>
</feature>
<feature type="helix" evidence="13">
    <location>
        <begin position="592"/>
        <end position="597"/>
    </location>
</feature>
<feature type="helix" evidence="13">
    <location>
        <begin position="610"/>
        <end position="613"/>
    </location>
</feature>
<feature type="helix" evidence="13">
    <location>
        <begin position="615"/>
        <end position="631"/>
    </location>
</feature>
<feature type="turn" evidence="13">
    <location>
        <begin position="641"/>
        <end position="646"/>
    </location>
</feature>
<feature type="helix" evidence="13">
    <location>
        <begin position="649"/>
        <end position="668"/>
    </location>
</feature>
<feature type="helix" evidence="13">
    <location>
        <begin position="670"/>
        <end position="672"/>
    </location>
</feature>
<feature type="helix" evidence="13">
    <location>
        <begin position="685"/>
        <end position="700"/>
    </location>
</feature>
<feature type="strand" evidence="13">
    <location>
        <begin position="701"/>
        <end position="704"/>
    </location>
</feature>
<feature type="helix" evidence="13">
    <location>
        <begin position="711"/>
        <end position="718"/>
    </location>
</feature>
<feature type="helix" evidence="13">
    <location>
        <begin position="720"/>
        <end position="723"/>
    </location>
</feature>
<feature type="helix" evidence="13">
    <location>
        <begin position="738"/>
        <end position="741"/>
    </location>
</feature>
<feature type="strand" evidence="13">
    <location>
        <begin position="748"/>
        <end position="751"/>
    </location>
</feature>
<feature type="turn" evidence="13">
    <location>
        <begin position="752"/>
        <end position="754"/>
    </location>
</feature>
<feature type="strand" evidence="13">
    <location>
        <begin position="781"/>
        <end position="783"/>
    </location>
</feature>
<feature type="strand" evidence="13">
    <location>
        <begin position="795"/>
        <end position="801"/>
    </location>
</feature>
<feature type="strand" evidence="13">
    <location>
        <begin position="804"/>
        <end position="808"/>
    </location>
</feature>
<feature type="strand" evidence="13">
    <location>
        <begin position="812"/>
        <end position="814"/>
    </location>
</feature>
<feature type="helix" evidence="13">
    <location>
        <begin position="817"/>
        <end position="820"/>
    </location>
</feature>
<feature type="turn" evidence="13">
    <location>
        <begin position="821"/>
        <end position="823"/>
    </location>
</feature>
<feature type="strand" evidence="13">
    <location>
        <begin position="824"/>
        <end position="826"/>
    </location>
</feature>